<name>TVP23_NEUCR</name>
<sequence>MMEATPTPGSLSWRLSSHPITLLTFLAFRSSSLLVYLFGLLFTDNLVMIFIITILLLAGDFYYLKNIAGRRLVGLRWWNEVDPNSGDSHWVFESSEPGTKIINATDSRFFWLAIYAQPLLWVVLAIVALFSLKFIWLPLVAIALVLTITNSLAFSRCDKFSQASNIAGTAFSSGNIAGNIASNMVGRFFSR</sequence>
<evidence type="ECO:0000250" key="1"/>
<evidence type="ECO:0000255" key="2"/>
<evidence type="ECO:0000305" key="3"/>
<proteinExistence type="inferred from homology"/>
<accession>Q7SGB6</accession>
<accession>V5IRI6</accession>
<comment type="function">
    <text evidence="1">Golgi membrane protein involved in vesicular trafficking.</text>
</comment>
<comment type="subcellular location">
    <subcellularLocation>
        <location evidence="1">Golgi apparatus membrane</location>
        <topology evidence="1">Multi-pass membrane protein</topology>
    </subcellularLocation>
</comment>
<comment type="similarity">
    <text evidence="3">Belongs to the TVP23 family.</text>
</comment>
<dbReference type="EMBL" id="CM002236">
    <property type="protein sequence ID" value="ESA43966.1"/>
    <property type="molecule type" value="Genomic_DNA"/>
</dbReference>
<dbReference type="RefSeq" id="XP_011393013.1">
    <property type="nucleotide sequence ID" value="XM_011394711.1"/>
</dbReference>
<dbReference type="FunCoup" id="Q7SGB6">
    <property type="interactions" value="374"/>
</dbReference>
<dbReference type="STRING" id="367110.Q7SGB6"/>
<dbReference type="GlyCosmos" id="Q7SGB6">
    <property type="glycosylation" value="1 site, No reported glycans"/>
</dbReference>
<dbReference type="PaxDb" id="5141-EFNCRP00000002120"/>
<dbReference type="EnsemblFungi" id="ESA43966">
    <property type="protein sequence ID" value="ESA43966"/>
    <property type="gene ID" value="NCU02733"/>
</dbReference>
<dbReference type="GeneID" id="3881258"/>
<dbReference type="KEGG" id="ncr:NCU02733"/>
<dbReference type="VEuPathDB" id="FungiDB:NCU02733"/>
<dbReference type="HOGENOM" id="CLU_074845_1_0_1"/>
<dbReference type="InParanoid" id="Q7SGB6"/>
<dbReference type="OrthoDB" id="2151161at2759"/>
<dbReference type="Proteomes" id="UP000001805">
    <property type="component" value="Chromosome 1, Linkage Group I"/>
</dbReference>
<dbReference type="GO" id="GO:0000139">
    <property type="term" value="C:Golgi membrane"/>
    <property type="evidence" value="ECO:0000318"/>
    <property type="project" value="GO_Central"/>
</dbReference>
<dbReference type="GO" id="GO:0009306">
    <property type="term" value="P:protein secretion"/>
    <property type="evidence" value="ECO:0000318"/>
    <property type="project" value="GO_Central"/>
</dbReference>
<dbReference type="GO" id="GO:0016192">
    <property type="term" value="P:vesicle-mediated transport"/>
    <property type="evidence" value="ECO:0000318"/>
    <property type="project" value="GO_Central"/>
</dbReference>
<dbReference type="InterPro" id="IPR008564">
    <property type="entry name" value="TVP23-like"/>
</dbReference>
<dbReference type="PANTHER" id="PTHR13019">
    <property type="entry name" value="GOLGI APPARATUS MEMBRANE PROTEIN TVP23"/>
    <property type="match status" value="1"/>
</dbReference>
<dbReference type="PANTHER" id="PTHR13019:SF7">
    <property type="entry name" value="GOLGI APPARATUS MEMBRANE PROTEIN TVP23"/>
    <property type="match status" value="1"/>
</dbReference>
<dbReference type="Pfam" id="PF05832">
    <property type="entry name" value="DUF846"/>
    <property type="match status" value="1"/>
</dbReference>
<reference key="1">
    <citation type="journal article" date="2003" name="Nature">
        <title>The genome sequence of the filamentous fungus Neurospora crassa.</title>
        <authorList>
            <person name="Galagan J.E."/>
            <person name="Calvo S.E."/>
            <person name="Borkovich K.A."/>
            <person name="Selker E.U."/>
            <person name="Read N.D."/>
            <person name="Jaffe D.B."/>
            <person name="FitzHugh W."/>
            <person name="Ma L.-J."/>
            <person name="Smirnov S."/>
            <person name="Purcell S."/>
            <person name="Rehman B."/>
            <person name="Elkins T."/>
            <person name="Engels R."/>
            <person name="Wang S."/>
            <person name="Nielsen C.B."/>
            <person name="Butler J."/>
            <person name="Endrizzi M."/>
            <person name="Qui D."/>
            <person name="Ianakiev P."/>
            <person name="Bell-Pedersen D."/>
            <person name="Nelson M.A."/>
            <person name="Werner-Washburne M."/>
            <person name="Selitrennikoff C.P."/>
            <person name="Kinsey J.A."/>
            <person name="Braun E.L."/>
            <person name="Zelter A."/>
            <person name="Schulte U."/>
            <person name="Kothe G.O."/>
            <person name="Jedd G."/>
            <person name="Mewes H.-W."/>
            <person name="Staben C."/>
            <person name="Marcotte E."/>
            <person name="Greenberg D."/>
            <person name="Roy A."/>
            <person name="Foley K."/>
            <person name="Naylor J."/>
            <person name="Stange-Thomann N."/>
            <person name="Barrett R."/>
            <person name="Gnerre S."/>
            <person name="Kamal M."/>
            <person name="Kamvysselis M."/>
            <person name="Mauceli E.W."/>
            <person name="Bielke C."/>
            <person name="Rudd S."/>
            <person name="Frishman D."/>
            <person name="Krystofova S."/>
            <person name="Rasmussen C."/>
            <person name="Metzenberg R.L."/>
            <person name="Perkins D.D."/>
            <person name="Kroken S."/>
            <person name="Cogoni C."/>
            <person name="Macino G."/>
            <person name="Catcheside D.E.A."/>
            <person name="Li W."/>
            <person name="Pratt R.J."/>
            <person name="Osmani S.A."/>
            <person name="DeSouza C.P.C."/>
            <person name="Glass N.L."/>
            <person name="Orbach M.J."/>
            <person name="Berglund J.A."/>
            <person name="Voelker R."/>
            <person name="Yarden O."/>
            <person name="Plamann M."/>
            <person name="Seiler S."/>
            <person name="Dunlap J.C."/>
            <person name="Radford A."/>
            <person name="Aramayo R."/>
            <person name="Natvig D.O."/>
            <person name="Alex L.A."/>
            <person name="Mannhaupt G."/>
            <person name="Ebbole D.J."/>
            <person name="Freitag M."/>
            <person name="Paulsen I."/>
            <person name="Sachs M.S."/>
            <person name="Lander E.S."/>
            <person name="Nusbaum C."/>
            <person name="Birren B.W."/>
        </authorList>
    </citation>
    <scope>NUCLEOTIDE SEQUENCE [LARGE SCALE GENOMIC DNA]</scope>
    <source>
        <strain>ATCC 24698 / 74-OR23-1A / CBS 708.71 / DSM 1257 / FGSC 987</strain>
    </source>
</reference>
<keyword id="KW-0325">Glycoprotein</keyword>
<keyword id="KW-0333">Golgi apparatus</keyword>
<keyword id="KW-0472">Membrane</keyword>
<keyword id="KW-1185">Reference proteome</keyword>
<keyword id="KW-0812">Transmembrane</keyword>
<keyword id="KW-1133">Transmembrane helix</keyword>
<protein>
    <recommendedName>
        <fullName>Golgi apparatus membrane protein tvp23</fullName>
    </recommendedName>
</protein>
<gene>
    <name type="primary">tvp23</name>
    <name type="ORF">NCU02733</name>
</gene>
<feature type="chain" id="PRO_0000343051" description="Golgi apparatus membrane protein tvp23">
    <location>
        <begin position="1"/>
        <end position="191"/>
    </location>
</feature>
<feature type="transmembrane region" description="Helical" evidence="2">
    <location>
        <begin position="20"/>
        <end position="40"/>
    </location>
</feature>
<feature type="transmembrane region" description="Helical" evidence="2">
    <location>
        <begin position="46"/>
        <end position="64"/>
    </location>
</feature>
<feature type="transmembrane region" description="Helical" evidence="2">
    <location>
        <begin position="109"/>
        <end position="129"/>
    </location>
</feature>
<feature type="transmembrane region" description="Helical" evidence="2">
    <location>
        <begin position="134"/>
        <end position="154"/>
    </location>
</feature>
<feature type="glycosylation site" description="N-linked (GlcNAc...) asparagine" evidence="2">
    <location>
        <position position="103"/>
    </location>
</feature>
<organism>
    <name type="scientific">Neurospora crassa (strain ATCC 24698 / 74-OR23-1A / CBS 708.71 / DSM 1257 / FGSC 987)</name>
    <dbReference type="NCBI Taxonomy" id="367110"/>
    <lineage>
        <taxon>Eukaryota</taxon>
        <taxon>Fungi</taxon>
        <taxon>Dikarya</taxon>
        <taxon>Ascomycota</taxon>
        <taxon>Pezizomycotina</taxon>
        <taxon>Sordariomycetes</taxon>
        <taxon>Sordariomycetidae</taxon>
        <taxon>Sordariales</taxon>
        <taxon>Sordariaceae</taxon>
        <taxon>Neurospora</taxon>
    </lineage>
</organism>